<organism evidence="9">
    <name type="scientific">Arabidopsis thaliana</name>
    <name type="common">Mouse-ear cress</name>
    <dbReference type="NCBI Taxonomy" id="3702"/>
    <lineage>
        <taxon>Eukaryota</taxon>
        <taxon>Viridiplantae</taxon>
        <taxon>Streptophyta</taxon>
        <taxon>Embryophyta</taxon>
        <taxon>Tracheophyta</taxon>
        <taxon>Spermatophyta</taxon>
        <taxon>Magnoliopsida</taxon>
        <taxon>eudicotyledons</taxon>
        <taxon>Gunneridae</taxon>
        <taxon>Pentapetalae</taxon>
        <taxon>rosids</taxon>
        <taxon>malvids</taxon>
        <taxon>Brassicales</taxon>
        <taxon>Brassicaceae</taxon>
        <taxon>Camelineae</taxon>
        <taxon>Arabidopsis</taxon>
    </lineage>
</organism>
<reference key="1">
    <citation type="journal article" date="1999" name="Nature">
        <title>Sequence and analysis of chromosome 4 of the plant Arabidopsis thaliana.</title>
        <authorList>
            <person name="Mayer K.F.X."/>
            <person name="Schueller C."/>
            <person name="Wambutt R."/>
            <person name="Murphy G."/>
            <person name="Volckaert G."/>
            <person name="Pohl T."/>
            <person name="Duesterhoeft A."/>
            <person name="Stiekema W."/>
            <person name="Entian K.-D."/>
            <person name="Terryn N."/>
            <person name="Harris B."/>
            <person name="Ansorge W."/>
            <person name="Brandt P."/>
            <person name="Grivell L.A."/>
            <person name="Rieger M."/>
            <person name="Weichselgartner M."/>
            <person name="de Simone V."/>
            <person name="Obermaier B."/>
            <person name="Mache R."/>
            <person name="Mueller M."/>
            <person name="Kreis M."/>
            <person name="Delseny M."/>
            <person name="Puigdomenech P."/>
            <person name="Watson M."/>
            <person name="Schmidtheini T."/>
            <person name="Reichert B."/>
            <person name="Portetelle D."/>
            <person name="Perez-Alonso M."/>
            <person name="Boutry M."/>
            <person name="Bancroft I."/>
            <person name="Vos P."/>
            <person name="Hoheisel J."/>
            <person name="Zimmermann W."/>
            <person name="Wedler H."/>
            <person name="Ridley P."/>
            <person name="Langham S.-A."/>
            <person name="McCullagh B."/>
            <person name="Bilham L."/>
            <person name="Robben J."/>
            <person name="van der Schueren J."/>
            <person name="Grymonprez B."/>
            <person name="Chuang Y.-J."/>
            <person name="Vandenbussche F."/>
            <person name="Braeken M."/>
            <person name="Weltjens I."/>
            <person name="Voet M."/>
            <person name="Bastiaens I."/>
            <person name="Aert R."/>
            <person name="Defoor E."/>
            <person name="Weitzenegger T."/>
            <person name="Bothe G."/>
            <person name="Ramsperger U."/>
            <person name="Hilbert H."/>
            <person name="Braun M."/>
            <person name="Holzer E."/>
            <person name="Brandt A."/>
            <person name="Peters S."/>
            <person name="van Staveren M."/>
            <person name="Dirkse W."/>
            <person name="Mooijman P."/>
            <person name="Klein Lankhorst R."/>
            <person name="Rose M."/>
            <person name="Hauf J."/>
            <person name="Koetter P."/>
            <person name="Berneiser S."/>
            <person name="Hempel S."/>
            <person name="Feldpausch M."/>
            <person name="Lamberth S."/>
            <person name="Van den Daele H."/>
            <person name="De Keyser A."/>
            <person name="Buysshaert C."/>
            <person name="Gielen J."/>
            <person name="Villarroel R."/>
            <person name="De Clercq R."/>
            <person name="van Montagu M."/>
            <person name="Rogers J."/>
            <person name="Cronin A."/>
            <person name="Quail M.A."/>
            <person name="Bray-Allen S."/>
            <person name="Clark L."/>
            <person name="Doggett J."/>
            <person name="Hall S."/>
            <person name="Kay M."/>
            <person name="Lennard N."/>
            <person name="McLay K."/>
            <person name="Mayes R."/>
            <person name="Pettett A."/>
            <person name="Rajandream M.A."/>
            <person name="Lyne M."/>
            <person name="Benes V."/>
            <person name="Rechmann S."/>
            <person name="Borkova D."/>
            <person name="Bloecker H."/>
            <person name="Scharfe M."/>
            <person name="Grimm M."/>
            <person name="Loehnert T.-H."/>
            <person name="Dose S."/>
            <person name="de Haan M."/>
            <person name="Maarse A.C."/>
            <person name="Schaefer M."/>
            <person name="Mueller-Auer S."/>
            <person name="Gabel C."/>
            <person name="Fuchs M."/>
            <person name="Fartmann B."/>
            <person name="Granderath K."/>
            <person name="Dauner D."/>
            <person name="Herzl A."/>
            <person name="Neumann S."/>
            <person name="Argiriou A."/>
            <person name="Vitale D."/>
            <person name="Liguori R."/>
            <person name="Piravandi E."/>
            <person name="Massenet O."/>
            <person name="Quigley F."/>
            <person name="Clabauld G."/>
            <person name="Muendlein A."/>
            <person name="Felber R."/>
            <person name="Schnabl S."/>
            <person name="Hiller R."/>
            <person name="Schmidt W."/>
            <person name="Lecharny A."/>
            <person name="Aubourg S."/>
            <person name="Chefdor F."/>
            <person name="Cooke R."/>
            <person name="Berger C."/>
            <person name="Monfort A."/>
            <person name="Casacuberta E."/>
            <person name="Gibbons T."/>
            <person name="Weber N."/>
            <person name="Vandenbol M."/>
            <person name="Bargues M."/>
            <person name="Terol J."/>
            <person name="Torres A."/>
            <person name="Perez-Perez A."/>
            <person name="Purnelle B."/>
            <person name="Bent E."/>
            <person name="Johnson S."/>
            <person name="Tacon D."/>
            <person name="Jesse T."/>
            <person name="Heijnen L."/>
            <person name="Schwarz S."/>
            <person name="Scholler P."/>
            <person name="Heber S."/>
            <person name="Francs P."/>
            <person name="Bielke C."/>
            <person name="Frishman D."/>
            <person name="Haase D."/>
            <person name="Lemcke K."/>
            <person name="Mewes H.-W."/>
            <person name="Stocker S."/>
            <person name="Zaccaria P."/>
            <person name="Bevan M."/>
            <person name="Wilson R.K."/>
            <person name="de la Bastide M."/>
            <person name="Habermann K."/>
            <person name="Parnell L."/>
            <person name="Dedhia N."/>
            <person name="Gnoj L."/>
            <person name="Schutz K."/>
            <person name="Huang E."/>
            <person name="Spiegel L."/>
            <person name="Sekhon M."/>
            <person name="Murray J."/>
            <person name="Sheet P."/>
            <person name="Cordes M."/>
            <person name="Abu-Threideh J."/>
            <person name="Stoneking T."/>
            <person name="Kalicki J."/>
            <person name="Graves T."/>
            <person name="Harmon G."/>
            <person name="Edwards J."/>
            <person name="Latreille P."/>
            <person name="Courtney L."/>
            <person name="Cloud J."/>
            <person name="Abbott A."/>
            <person name="Scott K."/>
            <person name="Johnson D."/>
            <person name="Minx P."/>
            <person name="Bentley D."/>
            <person name="Fulton B."/>
            <person name="Miller N."/>
            <person name="Greco T."/>
            <person name="Kemp K."/>
            <person name="Kramer J."/>
            <person name="Fulton L."/>
            <person name="Mardis E."/>
            <person name="Dante M."/>
            <person name="Pepin K."/>
            <person name="Hillier L.W."/>
            <person name="Nelson J."/>
            <person name="Spieth J."/>
            <person name="Ryan E."/>
            <person name="Andrews S."/>
            <person name="Geisel C."/>
            <person name="Layman D."/>
            <person name="Du H."/>
            <person name="Ali J."/>
            <person name="Berghoff A."/>
            <person name="Jones K."/>
            <person name="Drone K."/>
            <person name="Cotton M."/>
            <person name="Joshu C."/>
            <person name="Antonoiu B."/>
            <person name="Zidanic M."/>
            <person name="Strong C."/>
            <person name="Sun H."/>
            <person name="Lamar B."/>
            <person name="Yordan C."/>
            <person name="Ma P."/>
            <person name="Zhong J."/>
            <person name="Preston R."/>
            <person name="Vil D."/>
            <person name="Shekher M."/>
            <person name="Matero A."/>
            <person name="Shah R."/>
            <person name="Swaby I.K."/>
            <person name="O'Shaughnessy A."/>
            <person name="Rodriguez M."/>
            <person name="Hoffman J."/>
            <person name="Till S."/>
            <person name="Granat S."/>
            <person name="Shohdy N."/>
            <person name="Hasegawa A."/>
            <person name="Hameed A."/>
            <person name="Lodhi M."/>
            <person name="Johnson A."/>
            <person name="Chen E."/>
            <person name="Marra M.A."/>
            <person name="Martienssen R."/>
            <person name="McCombie W.R."/>
        </authorList>
    </citation>
    <scope>NUCLEOTIDE SEQUENCE [LARGE SCALE GENOMIC DNA]</scope>
    <source>
        <strain>cv. Columbia</strain>
    </source>
</reference>
<reference evidence="12" key="2">
    <citation type="journal article" date="2017" name="Plant J.">
        <title>Araport11: a complete reannotation of the Arabidopsis thaliana reference genome.</title>
        <authorList>
            <person name="Cheng C.Y."/>
            <person name="Krishnakumar V."/>
            <person name="Chan A.P."/>
            <person name="Thibaud-Nissen F."/>
            <person name="Schobel S."/>
            <person name="Town C.D."/>
        </authorList>
    </citation>
    <scope>GENOME REANNOTATION</scope>
    <source>
        <strain evidence="12">cv. Columbia</strain>
    </source>
</reference>
<reference key="3">
    <citation type="journal article" date="2003" name="Science">
        <title>Empirical analysis of transcriptional activity in the Arabidopsis genome.</title>
        <authorList>
            <person name="Yamada K."/>
            <person name="Lim J."/>
            <person name="Dale J.M."/>
            <person name="Chen H."/>
            <person name="Shinn P."/>
            <person name="Palm C.J."/>
            <person name="Southwick A.M."/>
            <person name="Wu H.C."/>
            <person name="Kim C.J."/>
            <person name="Nguyen M."/>
            <person name="Pham P.K."/>
            <person name="Cheuk R.F."/>
            <person name="Karlin-Newmann G."/>
            <person name="Liu S.X."/>
            <person name="Lam B."/>
            <person name="Sakano H."/>
            <person name="Wu T."/>
            <person name="Yu G."/>
            <person name="Miranda M."/>
            <person name="Quach H.L."/>
            <person name="Tripp M."/>
            <person name="Chang C.H."/>
            <person name="Lee J.M."/>
            <person name="Toriumi M.J."/>
            <person name="Chan M.M."/>
            <person name="Tang C.C."/>
            <person name="Onodera C.S."/>
            <person name="Deng J.M."/>
            <person name="Akiyama K."/>
            <person name="Ansari Y."/>
            <person name="Arakawa T."/>
            <person name="Banh J."/>
            <person name="Banno F."/>
            <person name="Bowser L."/>
            <person name="Brooks S.Y."/>
            <person name="Carninci P."/>
            <person name="Chao Q."/>
            <person name="Choy N."/>
            <person name="Enju A."/>
            <person name="Goldsmith A.D."/>
            <person name="Gurjal M."/>
            <person name="Hansen N.F."/>
            <person name="Hayashizaki Y."/>
            <person name="Johnson-Hopson C."/>
            <person name="Hsuan V.W."/>
            <person name="Iida K."/>
            <person name="Karnes M."/>
            <person name="Khan S."/>
            <person name="Koesema E."/>
            <person name="Ishida J."/>
            <person name="Jiang P.X."/>
            <person name="Jones T."/>
            <person name="Kawai J."/>
            <person name="Kamiya A."/>
            <person name="Meyers C."/>
            <person name="Nakajima M."/>
            <person name="Narusaka M."/>
            <person name="Seki M."/>
            <person name="Sakurai T."/>
            <person name="Satou M."/>
            <person name="Tamse R."/>
            <person name="Vaysberg M."/>
            <person name="Wallender E.K."/>
            <person name="Wong C."/>
            <person name="Yamamura Y."/>
            <person name="Yuan S."/>
            <person name="Shinozaki K."/>
            <person name="Davis R.W."/>
            <person name="Theologis A."/>
            <person name="Ecker J.R."/>
        </authorList>
    </citation>
    <scope>NUCLEOTIDE SEQUENCE [LARGE SCALE MRNA]</scope>
    <source>
        <strain>cv. Columbia</strain>
    </source>
</reference>
<reference key="4">
    <citation type="journal article" date="2018" name="Plant Cell">
        <title>Two Plastidial Coiled-Coil Proteins Are Essential for Normal Starch Granule Initiation in Arabidopsis.</title>
        <authorList>
            <person name="Seung D."/>
            <person name="Schreier T.B."/>
            <person name="Buergy L."/>
            <person name="Eicke S."/>
            <person name="Zeeman S.C."/>
        </authorList>
    </citation>
    <scope>FUNCTION</scope>
    <scope>INTERACTION WITH PTST2</scope>
    <scope>SUBCELLULAR LOCATION</scope>
    <scope>DISRUPTION PHENOTYPE</scope>
    <scope>BIOTECHNOLOGY</scope>
</reference>
<reference key="5">
    <citation type="journal article" date="2019" name="New Phytol.">
        <title>PII1: a protein involved in starch initiation that determines granule number and size in Arabidopsis chloroplast.</title>
        <authorList>
            <person name="Vandromme C."/>
            <person name="Spriet C."/>
            <person name="Dauvillee D."/>
            <person name="Courseaux A."/>
            <person name="Putaux J.L."/>
            <person name="Wychowski A."/>
            <person name="Krzewinski F."/>
            <person name="Facon M."/>
            <person name="D'Hulst C."/>
            <person name="Wattebled F."/>
        </authorList>
    </citation>
    <scope>FUNCTION</scope>
    <scope>INTERACTION WITH SS4</scope>
    <scope>SUBCELLULAR LOCATION</scope>
    <scope>DISRUPTION PHENOTYPE</scope>
</reference>
<name>PII1_ARATH</name>
<comment type="function">
    <text evidence="2 3">Required for the initiation of starch granules biosynthesis in leaf chloroplasts (PubMed:29866647, PubMed:30055112). Involved in determining starch granule number and size in chloroplasts (PubMed:30055112).</text>
</comment>
<comment type="subunit">
    <text evidence="2 3">Interacts with PTST2; the interaction is essential for the initiation of starch granules biosynthesis in leaf chloroplasts (PubMed:29866647). Interacts with SS4; the interaction is essential for the initiation of starch granules biosynthesis in leaf chloroplasts (PubMed:30055112).</text>
</comment>
<comment type="subcellular location">
    <subcellularLocation>
        <location evidence="1 2 3">Plastid</location>
        <location evidence="1 2 3">Chloroplast</location>
    </subcellularLocation>
    <text evidence="2">Is in the soluble protein fraction of the leaves. Locates to distinct puncta within the chloroplasts.</text>
</comment>
<comment type="disruption phenotype">
    <text evidence="2 3">Displays wild-type growth rate and unchanged starch amounts and distribution in leaves (PubMed:30055112). Starch synthesis, starch degradation rates and starch ultrastructure as in wild-type leaves (PubMed:30055112). No change in starch-metabolizing enzymes activity, including SS1, SS3, branching enzymes, debranching enzymes or phosphorylases (PubMed:30055112). No change in expression of SS4, PTST2 and PTST3 (PubMed:30055112). No effect on SS4 localization within chloroplasts (PubMed:30055112). Larger chloroplast starch granules than wild-type (PubMed:29866647, PubMed:30055112). However, in most chloroplasts only one large starch granule is present, in contrast to many in wild-type (PubMed:29866647, PubMed:30055112). Starch granules are flat and lenticular as in wild-type (PubMed:30055112). Accumulates ADP-glucose, the substrate for starch synthesis (PubMed:29866647). No effect in amylopectin and amylose biosynthesis (PubMed:29866647, PubMed:30055112). No effect on PTST2 localization within chloroplasts (PubMed:29866647). Accumulation of starch granules in the columella of primary and lateral roots similar to wild-type (PubMed:30055112). The roots of 2-wk-old seedlings respond to gravity and develop as wild-type (PubMed:30055112). PII1/mrc mfp1 double mutant has a higher proportion of chloroplasts with no visible starch granule than either of the single mutants, and even higher accumulation of ADP-glucose than the single pII1/mrc mutant (PubMed:29866647). PTST2 does not associate with thylakoid membranes in the double mutant (PubMed:29866647).</text>
</comment>
<comment type="biotechnology">
    <text evidence="7">May be a potential target for increasing starch granule size for indurstrial purposes. Modifying granule size in starch crops has an effect on both the ease of commercial starch preparation and on the final quality of various food and non-food products.</text>
</comment>
<comment type="sequence caution" evidence="6">
    <conflict type="erroneous gene model prediction">
        <sequence resource="EMBL-CDS" id="CAA16971"/>
    </conflict>
</comment>
<comment type="sequence caution" evidence="6">
    <conflict type="erroneous gene model prediction">
        <sequence resource="EMBL-CDS" id="CAB79937"/>
    </conflict>
</comment>
<proteinExistence type="evidence at protein level"/>
<protein>
    <recommendedName>
        <fullName evidence="5">Protein involved in starch initiation 1</fullName>
    </recommendedName>
    <alternativeName>
        <fullName evidence="10">Myosin heavy chain-related protein</fullName>
    </alternativeName>
    <alternativeName>
        <fullName evidence="4">Myosin-resembling chloroplast protein</fullName>
    </alternativeName>
</protein>
<sequence length="783" mass="90019">MGFSQAIRLNLASFSSPSPCDYCLTRVVNHKQKSLVAFPSITRRKRHLLLSVQSVLHNTRPNINDNGSAESANVLFDKLFARTHRLERQTNQHSVYPDDDDLPYSNLGVLESDLEAALVALLKREEDLHDAERKLLSDKNKLNRAKEELEKREKTISEASLKHESLQEELKRANVELASQAREIEELKHKLRERDEERAALQSSLTLKEEELEKMRQEIANRSKEVSMAISEFESKSQLLSKANEVVKRQEGEIYALQRALEEKEEELEISKATKKLEQEKLRETEANLKKQTEEWLIAQDEVNKLKEETVKRLGEANETMEDFMKVKKLLTDVRFELISSREALVFSREQMEEKELLLEKQLEELEEQRKSVLSYMQSLRDAHTEVESERVKLRVVEAKNFALEREISVQKELLEDLREELQKEKPLLELAMHDISVIQDELYKKANAFQVSQNLLQEKESSLVEAKLEIQHLKSEQASLELLLQEKDEELAEARNKLGEVNQEVTELKALMISREDQLMEATEMLKEKDVHLHRIEGELGSSKLKVTEAEMVVERIAELTNRLLMSTTNGQNQNAMRINNEISIDSMQQPLEKPHDDYGMENKRLVMELSFTRENLRMKEMEVLAVQRALTFKDEEINVVMGRLEAKEQELKKLKEETINDSEDLKVLYALAQERVGEKTMGDLAIEMLQLEAANLEVEAATSALQKLAKMSTELLTQADMSIEADTTHTVMPERGYSEGSNECLGEVKTEVVRLWSLTEKLLENAGIVAGTSTCMEGVIL</sequence>
<evidence type="ECO:0000255" key="1"/>
<evidence type="ECO:0000269" key="2">
    <source>
    </source>
</evidence>
<evidence type="ECO:0000269" key="3">
    <source>
    </source>
</evidence>
<evidence type="ECO:0000303" key="4">
    <source>
    </source>
</evidence>
<evidence type="ECO:0000303" key="5">
    <source>
    </source>
</evidence>
<evidence type="ECO:0000305" key="6"/>
<evidence type="ECO:0000305" key="7">
    <source>
    </source>
</evidence>
<evidence type="ECO:0000312" key="8">
    <source>
        <dbReference type="Araport" id="AT4G32190"/>
    </source>
</evidence>
<evidence type="ECO:0000312" key="9">
    <source>
        <dbReference type="EMBL" id="AAN12990.1"/>
    </source>
</evidence>
<evidence type="ECO:0000312" key="10">
    <source>
        <dbReference type="EMBL" id="AEE86018.1"/>
    </source>
</evidence>
<evidence type="ECO:0000312" key="11">
    <source>
        <dbReference type="EMBL" id="CAA16971.1"/>
    </source>
</evidence>
<evidence type="ECO:0000312" key="12">
    <source>
        <dbReference type="Proteomes" id="UP000006548"/>
    </source>
</evidence>
<evidence type="ECO:0000312" key="13">
    <source>
        <dbReference type="TAIR" id="AT4G32190"/>
    </source>
</evidence>
<accession>Q8H1E5</accession>
<accession>O49371</accession>
<accession>Q9C5L5</accession>
<dbReference type="EMBL" id="AL021811">
    <property type="protein sequence ID" value="CAA16971.1"/>
    <property type="status" value="ALT_SEQ"/>
    <property type="molecule type" value="Genomic_DNA"/>
</dbReference>
<dbReference type="EMBL" id="AL161580">
    <property type="protein sequence ID" value="CAB79937.1"/>
    <property type="status" value="ALT_SEQ"/>
    <property type="molecule type" value="Genomic_DNA"/>
</dbReference>
<dbReference type="EMBL" id="CP002687">
    <property type="protein sequence ID" value="AEE86018.1"/>
    <property type="molecule type" value="Genomic_DNA"/>
</dbReference>
<dbReference type="EMBL" id="AF360163">
    <property type="protein sequence ID" value="AAK25873.1"/>
    <property type="molecule type" value="mRNA"/>
</dbReference>
<dbReference type="EMBL" id="AY150465">
    <property type="protein sequence ID" value="AAN12990.1"/>
    <property type="molecule type" value="mRNA"/>
</dbReference>
<dbReference type="PIR" id="T05409">
    <property type="entry name" value="T05409"/>
</dbReference>
<dbReference type="RefSeq" id="NP_567889.1">
    <property type="nucleotide sequence ID" value="NM_119371.3"/>
</dbReference>
<dbReference type="SMR" id="Q8H1E5"/>
<dbReference type="FunCoup" id="Q8H1E5">
    <property type="interactions" value="442"/>
</dbReference>
<dbReference type="IntAct" id="Q8H1E5">
    <property type="interactions" value="35"/>
</dbReference>
<dbReference type="STRING" id="3702.Q8H1E5"/>
<dbReference type="iPTMnet" id="Q8H1E5"/>
<dbReference type="PaxDb" id="3702-AT4G32190-1"/>
<dbReference type="ProteomicsDB" id="177217"/>
<dbReference type="EnsemblPlants" id="AT4G32190.1">
    <property type="protein sequence ID" value="AT4G32190.1"/>
    <property type="gene ID" value="AT4G32190"/>
</dbReference>
<dbReference type="GeneID" id="829352"/>
<dbReference type="Gramene" id="AT4G32190.1">
    <property type="protein sequence ID" value="AT4G32190.1"/>
    <property type="gene ID" value="AT4G32190"/>
</dbReference>
<dbReference type="KEGG" id="ath:AT4G32190"/>
<dbReference type="Araport" id="AT4G32190"/>
<dbReference type="TAIR" id="AT4G32190">
    <property type="gene designation" value="PII1"/>
</dbReference>
<dbReference type="eggNOG" id="ENOG502QUNX">
    <property type="taxonomic scope" value="Eukaryota"/>
</dbReference>
<dbReference type="HOGENOM" id="CLU_010442_0_0_1"/>
<dbReference type="OMA" id="TEEWLIA"/>
<dbReference type="Proteomes" id="UP000006548">
    <property type="component" value="Chromosome 4"/>
</dbReference>
<dbReference type="ExpressionAtlas" id="Q8H1E5">
    <property type="expression patterns" value="baseline and differential"/>
</dbReference>
<dbReference type="GO" id="GO:0009507">
    <property type="term" value="C:chloroplast"/>
    <property type="evidence" value="ECO:0000314"/>
    <property type="project" value="TAIR"/>
</dbReference>
<dbReference type="GO" id="GO:0010581">
    <property type="term" value="P:regulation of starch biosynthetic process"/>
    <property type="evidence" value="ECO:0000315"/>
    <property type="project" value="TAIR"/>
</dbReference>
<dbReference type="GO" id="GO:0019252">
    <property type="term" value="P:starch biosynthetic process"/>
    <property type="evidence" value="ECO:0000315"/>
    <property type="project" value="TAIR"/>
</dbReference>
<dbReference type="PANTHER" id="PTHR23160:SF19">
    <property type="entry name" value="MYOSIN HEAVY CHAIN-RELATED PROTEIN"/>
    <property type="match status" value="1"/>
</dbReference>
<dbReference type="PANTHER" id="PTHR23160">
    <property type="entry name" value="SYNAPTONEMAL COMPLEX PROTEIN-RELATED"/>
    <property type="match status" value="1"/>
</dbReference>
<feature type="transit peptide" description="Chloroplast" evidence="1">
    <location>
        <begin position="1"/>
        <end position="27"/>
    </location>
</feature>
<feature type="chain" id="PRO_0000461132" description="Protein involved in starch initiation 1" evidence="1">
    <location>
        <begin position="28"/>
        <end position="783"/>
    </location>
</feature>
<feature type="coiled-coil region" evidence="1">
    <location>
        <begin position="128"/>
        <end position="309"/>
    </location>
</feature>
<feature type="coiled-coil region" evidence="1">
    <location>
        <begin position="345"/>
        <end position="432"/>
    </location>
</feature>
<feature type="coiled-coil region" evidence="1">
    <location>
        <begin position="457"/>
        <end position="512"/>
    </location>
</feature>
<feature type="sequence conflict" description="In Ref. 3; AAK25873." evidence="6" ref="3">
    <original>D</original>
    <variation>G</variation>
    <location>
        <position position="98"/>
    </location>
</feature>
<keyword id="KW-0150">Chloroplast</keyword>
<keyword id="KW-0175">Coiled coil</keyword>
<keyword id="KW-0934">Plastid</keyword>
<keyword id="KW-1185">Reference proteome</keyword>
<keyword id="KW-0750">Starch biosynthesis</keyword>
<keyword id="KW-0809">Transit peptide</keyword>
<gene>
    <name evidence="5 13" type="primary">PII1</name>
    <name evidence="4" type="synonym">MRC</name>
    <name evidence="8" type="ordered locus">At4g32190</name>
    <name evidence="11" type="ORF">F10M6.170</name>
</gene>